<comment type="function">
    <text evidence="1">Purine salvage pathway enzyme that catalyzes the transfer of the ribosyl-5-phosphate group from 5-phospho-alpha-D-ribose 1-diphosphate (PRPP) to the N9 position of the 6-oxopurines guanine and xanthine to form the corresponding ribonucleotides GMP (guanosine 5'-monophosphate) and XMP (xanthosine 5'-monophosphate), with the release of PPi. To a lesser extent, also acts on hypoxanthine.</text>
</comment>
<comment type="catalytic activity">
    <reaction evidence="1">
        <text>GMP + diphosphate = guanine + 5-phospho-alpha-D-ribose 1-diphosphate</text>
        <dbReference type="Rhea" id="RHEA:25424"/>
        <dbReference type="ChEBI" id="CHEBI:16235"/>
        <dbReference type="ChEBI" id="CHEBI:33019"/>
        <dbReference type="ChEBI" id="CHEBI:58017"/>
        <dbReference type="ChEBI" id="CHEBI:58115"/>
    </reaction>
    <physiologicalReaction direction="right-to-left" evidence="1">
        <dbReference type="Rhea" id="RHEA:25426"/>
    </physiologicalReaction>
</comment>
<comment type="catalytic activity">
    <reaction evidence="1">
        <text>XMP + diphosphate = xanthine + 5-phospho-alpha-D-ribose 1-diphosphate</text>
        <dbReference type="Rhea" id="RHEA:10800"/>
        <dbReference type="ChEBI" id="CHEBI:17712"/>
        <dbReference type="ChEBI" id="CHEBI:33019"/>
        <dbReference type="ChEBI" id="CHEBI:57464"/>
        <dbReference type="ChEBI" id="CHEBI:58017"/>
        <dbReference type="EC" id="2.4.2.22"/>
    </reaction>
    <physiologicalReaction direction="right-to-left" evidence="1">
        <dbReference type="Rhea" id="RHEA:10802"/>
    </physiologicalReaction>
</comment>
<comment type="catalytic activity">
    <reaction evidence="1">
        <text>IMP + diphosphate = hypoxanthine + 5-phospho-alpha-D-ribose 1-diphosphate</text>
        <dbReference type="Rhea" id="RHEA:17973"/>
        <dbReference type="ChEBI" id="CHEBI:17368"/>
        <dbReference type="ChEBI" id="CHEBI:33019"/>
        <dbReference type="ChEBI" id="CHEBI:58017"/>
        <dbReference type="ChEBI" id="CHEBI:58053"/>
    </reaction>
    <physiologicalReaction direction="right-to-left" evidence="1">
        <dbReference type="Rhea" id="RHEA:17975"/>
    </physiologicalReaction>
</comment>
<comment type="cofactor">
    <cofactor evidence="1">
        <name>Mg(2+)</name>
        <dbReference type="ChEBI" id="CHEBI:18420"/>
    </cofactor>
</comment>
<comment type="pathway">
    <text evidence="1">Purine metabolism; GMP biosynthesis via salvage pathway; GMP from guanine: step 1/1.</text>
</comment>
<comment type="pathway">
    <text evidence="1">Purine metabolism; XMP biosynthesis via salvage pathway; XMP from xanthine: step 1/1.</text>
</comment>
<comment type="subunit">
    <text evidence="1">Homotetramer.</text>
</comment>
<comment type="subcellular location">
    <subcellularLocation>
        <location evidence="1">Cell inner membrane</location>
        <topology evidence="1">Peripheral membrane protein</topology>
    </subcellularLocation>
</comment>
<comment type="similarity">
    <text evidence="1">Belongs to the purine/pyrimidine phosphoribosyltransferase family. XGPT subfamily.</text>
</comment>
<evidence type="ECO:0000255" key="1">
    <source>
        <dbReference type="HAMAP-Rule" id="MF_01903"/>
    </source>
</evidence>
<dbReference type="EC" id="2.4.2.-" evidence="1"/>
<dbReference type="EC" id="2.4.2.22" evidence="1"/>
<dbReference type="EMBL" id="CP000661">
    <property type="protein sequence ID" value="ABP69950.1"/>
    <property type="molecule type" value="Genomic_DNA"/>
</dbReference>
<dbReference type="SMR" id="A4WRD6"/>
<dbReference type="STRING" id="349102.Rsph17025_1049"/>
<dbReference type="KEGG" id="rsq:Rsph17025_1049"/>
<dbReference type="eggNOG" id="COG2236">
    <property type="taxonomic scope" value="Bacteria"/>
</dbReference>
<dbReference type="HOGENOM" id="CLU_080904_3_0_5"/>
<dbReference type="BioCyc" id="RSPH349102:G1G8M-1075-MONOMER"/>
<dbReference type="UniPathway" id="UPA00602">
    <property type="reaction ID" value="UER00658"/>
</dbReference>
<dbReference type="UniPathway" id="UPA00909">
    <property type="reaction ID" value="UER00887"/>
</dbReference>
<dbReference type="GO" id="GO:0005886">
    <property type="term" value="C:plasma membrane"/>
    <property type="evidence" value="ECO:0007669"/>
    <property type="project" value="UniProtKB-SubCell"/>
</dbReference>
<dbReference type="GO" id="GO:0052657">
    <property type="term" value="F:guanine phosphoribosyltransferase activity"/>
    <property type="evidence" value="ECO:0007669"/>
    <property type="project" value="RHEA"/>
</dbReference>
<dbReference type="GO" id="GO:0004422">
    <property type="term" value="F:hypoxanthine phosphoribosyltransferase activity"/>
    <property type="evidence" value="ECO:0007669"/>
    <property type="project" value="RHEA"/>
</dbReference>
<dbReference type="GO" id="GO:0000287">
    <property type="term" value="F:magnesium ion binding"/>
    <property type="evidence" value="ECO:0007669"/>
    <property type="project" value="UniProtKB-UniRule"/>
</dbReference>
<dbReference type="GO" id="GO:0000310">
    <property type="term" value="F:xanthine phosphoribosyltransferase activity"/>
    <property type="evidence" value="ECO:0007669"/>
    <property type="project" value="UniProtKB-UniRule"/>
</dbReference>
<dbReference type="GO" id="GO:0032263">
    <property type="term" value="P:GMP salvage"/>
    <property type="evidence" value="ECO:0007669"/>
    <property type="project" value="UniProtKB-UniRule"/>
</dbReference>
<dbReference type="GO" id="GO:0006166">
    <property type="term" value="P:purine ribonucleoside salvage"/>
    <property type="evidence" value="ECO:0007669"/>
    <property type="project" value="UniProtKB-KW"/>
</dbReference>
<dbReference type="GO" id="GO:0032265">
    <property type="term" value="P:XMP salvage"/>
    <property type="evidence" value="ECO:0007669"/>
    <property type="project" value="UniProtKB-UniRule"/>
</dbReference>
<dbReference type="CDD" id="cd06223">
    <property type="entry name" value="PRTases_typeI"/>
    <property type="match status" value="1"/>
</dbReference>
<dbReference type="Gene3D" id="3.40.50.2020">
    <property type="match status" value="1"/>
</dbReference>
<dbReference type="HAMAP" id="MF_01903">
    <property type="entry name" value="XGPRT"/>
    <property type="match status" value="1"/>
</dbReference>
<dbReference type="InterPro" id="IPR000836">
    <property type="entry name" value="PRibTrfase_dom"/>
</dbReference>
<dbReference type="InterPro" id="IPR029057">
    <property type="entry name" value="PRTase-like"/>
</dbReference>
<dbReference type="InterPro" id="IPR023747">
    <property type="entry name" value="Xanthine_Guanine_PRibTrfase"/>
</dbReference>
<dbReference type="NCBIfam" id="NF006613">
    <property type="entry name" value="PRK09177.1"/>
    <property type="match status" value="1"/>
</dbReference>
<dbReference type="PANTHER" id="PTHR39563">
    <property type="entry name" value="XANTHINE PHOSPHORIBOSYLTRANSFERASE"/>
    <property type="match status" value="1"/>
</dbReference>
<dbReference type="PANTHER" id="PTHR39563:SF1">
    <property type="entry name" value="XANTHINE-GUANINE PHOSPHORIBOSYLTRANSFERASE"/>
    <property type="match status" value="1"/>
</dbReference>
<dbReference type="Pfam" id="PF00156">
    <property type="entry name" value="Pribosyltran"/>
    <property type="match status" value="1"/>
</dbReference>
<dbReference type="SUPFAM" id="SSF53271">
    <property type="entry name" value="PRTase-like"/>
    <property type="match status" value="1"/>
</dbReference>
<dbReference type="PROSITE" id="PS00103">
    <property type="entry name" value="PUR_PYR_PR_TRANSFER"/>
    <property type="match status" value="1"/>
</dbReference>
<accession>A4WRD6</accession>
<gene>
    <name evidence="1" type="primary">gpt</name>
    <name type="ordered locus">Rsph17025_1049</name>
</gene>
<protein>
    <recommendedName>
        <fullName evidence="1">Xanthine-guanine phosphoribosyltransferase</fullName>
        <shortName evidence="1">XGPRT</shortName>
        <ecNumber evidence="1">2.4.2.-</ecNumber>
        <ecNumber evidence="1">2.4.2.22</ecNumber>
    </recommendedName>
    <alternativeName>
        <fullName evidence="1">Xanthine phosphoribosyltransferase</fullName>
    </alternativeName>
</protein>
<reference key="1">
    <citation type="submission" date="2007-04" db="EMBL/GenBank/DDBJ databases">
        <title>Complete sequence of chromosome of Rhodobacter sphaeroides ATCC 17025.</title>
        <authorList>
            <consortium name="US DOE Joint Genome Institute"/>
            <person name="Copeland A."/>
            <person name="Lucas S."/>
            <person name="Lapidus A."/>
            <person name="Barry K."/>
            <person name="Detter J.C."/>
            <person name="Glavina del Rio T."/>
            <person name="Hammon N."/>
            <person name="Israni S."/>
            <person name="Dalin E."/>
            <person name="Tice H."/>
            <person name="Pitluck S."/>
            <person name="Chertkov O."/>
            <person name="Brettin T."/>
            <person name="Bruce D."/>
            <person name="Han C."/>
            <person name="Schmutz J."/>
            <person name="Larimer F."/>
            <person name="Land M."/>
            <person name="Hauser L."/>
            <person name="Kyrpides N."/>
            <person name="Kim E."/>
            <person name="Richardson P."/>
            <person name="Mackenzie C."/>
            <person name="Choudhary M."/>
            <person name="Donohue T.J."/>
            <person name="Kaplan S."/>
        </authorList>
    </citation>
    <scope>NUCLEOTIDE SEQUENCE [LARGE SCALE GENOMIC DNA]</scope>
    <source>
        <strain>ATCC 17025 / ATH 2.4.3</strain>
    </source>
</reference>
<name>XGPT_CERS5</name>
<feature type="chain" id="PRO_1000070613" description="Xanthine-guanine phosphoribosyltransferase">
    <location>
        <begin position="1"/>
        <end position="167"/>
    </location>
</feature>
<feature type="binding site" evidence="1">
    <location>
        <begin position="47"/>
        <end position="48"/>
    </location>
    <ligand>
        <name>5-phospho-alpha-D-ribose 1-diphosphate</name>
        <dbReference type="ChEBI" id="CHEBI:58017"/>
    </ligand>
</feature>
<feature type="binding site" evidence="1">
    <location>
        <position position="79"/>
    </location>
    <ligand>
        <name>5-phospho-alpha-D-ribose 1-diphosphate</name>
        <dbReference type="ChEBI" id="CHEBI:58017"/>
    </ligand>
</feature>
<feature type="binding site" evidence="1">
    <location>
        <position position="79"/>
    </location>
    <ligand>
        <name>GMP</name>
        <dbReference type="ChEBI" id="CHEBI:58115"/>
    </ligand>
</feature>
<feature type="binding site" evidence="1">
    <location>
        <begin position="102"/>
        <end position="110"/>
    </location>
    <ligand>
        <name>5-phospho-alpha-D-ribose 1-diphosphate</name>
        <dbReference type="ChEBI" id="CHEBI:58017"/>
    </ligand>
</feature>
<feature type="binding site" evidence="1">
    <location>
        <position position="103"/>
    </location>
    <ligand>
        <name>Mg(2+)</name>
        <dbReference type="ChEBI" id="CHEBI:18420"/>
    </ligand>
</feature>
<feature type="binding site" evidence="1">
    <location>
        <begin position="106"/>
        <end position="110"/>
    </location>
    <ligand>
        <name>GMP</name>
        <dbReference type="ChEBI" id="CHEBI:58115"/>
    </ligand>
</feature>
<feature type="binding site" evidence="1">
    <location>
        <position position="106"/>
    </location>
    <ligand>
        <name>guanine</name>
        <dbReference type="ChEBI" id="CHEBI:16235"/>
    </ligand>
</feature>
<feature type="binding site" evidence="1">
    <location>
        <position position="106"/>
    </location>
    <ligand>
        <name>xanthine</name>
        <dbReference type="ChEBI" id="CHEBI:17712"/>
    </ligand>
</feature>
<feature type="binding site" evidence="1">
    <location>
        <begin position="148"/>
        <end position="149"/>
    </location>
    <ligand>
        <name>GMP</name>
        <dbReference type="ChEBI" id="CHEBI:58115"/>
    </ligand>
</feature>
<feature type="binding site" evidence="1">
    <location>
        <position position="149"/>
    </location>
    <ligand>
        <name>guanine</name>
        <dbReference type="ChEBI" id="CHEBI:16235"/>
    </ligand>
</feature>
<feature type="binding site" evidence="1">
    <location>
        <position position="149"/>
    </location>
    <ligand>
        <name>xanthine</name>
        <dbReference type="ChEBI" id="CHEBI:17712"/>
    </ligand>
</feature>
<keyword id="KW-0997">Cell inner membrane</keyword>
<keyword id="KW-1003">Cell membrane</keyword>
<keyword id="KW-0328">Glycosyltransferase</keyword>
<keyword id="KW-0460">Magnesium</keyword>
<keyword id="KW-0472">Membrane</keyword>
<keyword id="KW-0479">Metal-binding</keyword>
<keyword id="KW-0660">Purine salvage</keyword>
<keyword id="KW-0808">Transferase</keyword>
<proteinExistence type="inferred from homology"/>
<sequence>MKERLPHEKGFHVSWDQIHRDSRALAWRLDGQGPDNGAWRAVVGITRGGLVPAMIVSRELDIRTVDTISVKSYNWQEQQPPSVIKAPQAELMGDGHGILIVDDLVDSGKTLELVRTLYPRAHFATVYAKPSGRPMVDTYITEVSQDTWIFFPWDMALQYVEPYRGRD</sequence>
<organism>
    <name type="scientific">Cereibacter sphaeroides (strain ATCC 17025 / ATH 2.4.3)</name>
    <name type="common">Rhodobacter sphaeroides</name>
    <dbReference type="NCBI Taxonomy" id="349102"/>
    <lineage>
        <taxon>Bacteria</taxon>
        <taxon>Pseudomonadati</taxon>
        <taxon>Pseudomonadota</taxon>
        <taxon>Alphaproteobacteria</taxon>
        <taxon>Rhodobacterales</taxon>
        <taxon>Paracoccaceae</taxon>
        <taxon>Cereibacter</taxon>
    </lineage>
</organism>